<dbReference type="EC" id="3.1.6.2" evidence="2 5 8"/>
<dbReference type="EMBL" id="J04964">
    <property type="protein sequence ID" value="AAA60597.1"/>
    <property type="molecule type" value="mRNA"/>
</dbReference>
<dbReference type="EMBL" id="M16505">
    <property type="protein sequence ID" value="AAA60596.1"/>
    <property type="molecule type" value="mRNA"/>
</dbReference>
<dbReference type="EMBL" id="AK314034">
    <property type="protein sequence ID" value="BAG36744.1"/>
    <property type="molecule type" value="mRNA"/>
</dbReference>
<dbReference type="EMBL" id="BC075030">
    <property type="protein sequence ID" value="AAH75030.1"/>
    <property type="molecule type" value="mRNA"/>
</dbReference>
<dbReference type="EMBL" id="M23945">
    <property type="protein sequence ID" value="AAA60598.1"/>
    <property type="molecule type" value="Genomic_DNA"/>
</dbReference>
<dbReference type="EMBL" id="M23556">
    <property type="protein sequence ID" value="AAA60599.1"/>
    <property type="molecule type" value="Genomic_DNA"/>
</dbReference>
<dbReference type="PIR" id="A32641">
    <property type="entry name" value="KJHUAC"/>
</dbReference>
<dbReference type="RefSeq" id="NP_000342.2">
    <property type="nucleotide sequence ID" value="NM_000351.5"/>
</dbReference>
<dbReference type="RefSeq" id="NP_001307679.1">
    <property type="nucleotide sequence ID" value="NM_001320750.1"/>
</dbReference>
<dbReference type="RefSeq" id="NP_001307680.1">
    <property type="nucleotide sequence ID" value="NM_001320751.1"/>
</dbReference>
<dbReference type="RefSeq" id="NP_001307681.1">
    <property type="nucleotide sequence ID" value="NM_001320752.1"/>
</dbReference>
<dbReference type="RefSeq" id="NP_001307682.1">
    <property type="nucleotide sequence ID" value="NM_001320753.1"/>
</dbReference>
<dbReference type="RefSeq" id="NP_001307683.1">
    <property type="nucleotide sequence ID" value="NM_001320754.1"/>
</dbReference>
<dbReference type="PDB" id="1P49">
    <property type="method" value="X-ray"/>
    <property type="resolution" value="2.60 A"/>
    <property type="chains" value="A=22-583"/>
</dbReference>
<dbReference type="PDB" id="8EG3">
    <property type="method" value="X-ray"/>
    <property type="resolution" value="2.04 A"/>
    <property type="chains" value="A=1-583"/>
</dbReference>
<dbReference type="PDBsum" id="1P49"/>
<dbReference type="PDBsum" id="8EG3"/>
<dbReference type="SMR" id="P08842"/>
<dbReference type="BioGRID" id="106905">
    <property type="interactions" value="38"/>
</dbReference>
<dbReference type="FunCoup" id="P08842">
    <property type="interactions" value="219"/>
</dbReference>
<dbReference type="IntAct" id="P08842">
    <property type="interactions" value="31"/>
</dbReference>
<dbReference type="MINT" id="P08842"/>
<dbReference type="STRING" id="9606.ENSP00000217961"/>
<dbReference type="BindingDB" id="P08842"/>
<dbReference type="ChEMBL" id="CHEMBL3559"/>
<dbReference type="DrugBank" id="DB08416">
    <property type="generic name" value="(9BETA,13ALPHA,14BETA,17ALPHA)-2-METHOXYESTRA-1,3,5(10)-TRIENE-3,17-DIYL DISULFAMATE"/>
</dbReference>
<dbReference type="DrugBank" id="DB02735">
    <property type="generic name" value="2-Amino-3-Oxo-4-Sulfo-Butyric Acid"/>
</dbReference>
<dbReference type="DrugBank" id="DB06597">
    <property type="generic name" value="Estradiol sulfamate"/>
</dbReference>
<dbReference type="DrugBank" id="DB02292">
    <property type="generic name" value="Irosustat"/>
</dbReference>
<dbReference type="DrugBank" id="DB06713">
    <property type="generic name" value="Norelgestromin"/>
</dbReference>
<dbReference type="DrugBank" id="DB09070">
    <property type="generic name" value="Tibolone"/>
</dbReference>
<dbReference type="DrugBank" id="DB07615">
    <property type="generic name" value="Tranilast"/>
</dbReference>
<dbReference type="DrugCentral" id="P08842"/>
<dbReference type="SwissLipids" id="SLP:000001236"/>
<dbReference type="GlyConnect" id="1770">
    <property type="glycosylation" value="2 N-Linked glycans (1 site)"/>
</dbReference>
<dbReference type="GlyCosmos" id="P08842">
    <property type="glycosylation" value="2 sites, 2 glycans"/>
</dbReference>
<dbReference type="GlyGen" id="P08842">
    <property type="glycosylation" value="8 sites, 9 N-linked glycans (4 sites), 1 O-linked glycan (1 site)"/>
</dbReference>
<dbReference type="iPTMnet" id="P08842"/>
<dbReference type="PhosphoSitePlus" id="P08842"/>
<dbReference type="SwissPalm" id="P08842"/>
<dbReference type="BioMuta" id="STS"/>
<dbReference type="DMDM" id="135006"/>
<dbReference type="jPOST" id="P08842"/>
<dbReference type="MassIVE" id="P08842"/>
<dbReference type="PaxDb" id="9606-ENSP00000217961"/>
<dbReference type="ProteomicsDB" id="52168"/>
<dbReference type="Pumba" id="P08842"/>
<dbReference type="Antibodypedia" id="363">
    <property type="antibodies" value="258 antibodies from 31 providers"/>
</dbReference>
<dbReference type="DNASU" id="412"/>
<dbReference type="GeneID" id="412"/>
<dbReference type="KEGG" id="hsa:412"/>
<dbReference type="UCSC" id="uc004cry.5">
    <property type="organism name" value="human"/>
</dbReference>
<dbReference type="AGR" id="HGNC:11425"/>
<dbReference type="CTD" id="412"/>
<dbReference type="DisGeNET" id="412"/>
<dbReference type="GeneCards" id="STS"/>
<dbReference type="HGNC" id="HGNC:11425">
    <property type="gene designation" value="STS"/>
</dbReference>
<dbReference type="MalaCards" id="STS"/>
<dbReference type="MIM" id="300747">
    <property type="type" value="gene"/>
</dbReference>
<dbReference type="MIM" id="308100">
    <property type="type" value="phenotype"/>
</dbReference>
<dbReference type="neXtProt" id="NX_P08842"/>
<dbReference type="Orphanet" id="461">
    <property type="disease" value="Recessive X-linked ichthyosis"/>
</dbReference>
<dbReference type="Orphanet" id="281090">
    <property type="disease" value="Syndromic recessive X-linked ichthyosis"/>
</dbReference>
<dbReference type="PharmGKB" id="PA36225"/>
<dbReference type="VEuPathDB" id="HostDB:ENSG00000101846"/>
<dbReference type="eggNOG" id="KOG3867">
    <property type="taxonomic scope" value="Eukaryota"/>
</dbReference>
<dbReference type="HOGENOM" id="CLU_006332_13_4_1"/>
<dbReference type="InParanoid" id="P08842"/>
<dbReference type="OMA" id="KLFNLRM"/>
<dbReference type="OrthoDB" id="103349at2759"/>
<dbReference type="PAN-GO" id="P08842">
    <property type="GO annotations" value="1 GO annotation based on evolutionary models"/>
</dbReference>
<dbReference type="PhylomeDB" id="P08842"/>
<dbReference type="TreeFam" id="TF314186"/>
<dbReference type="BRENDA" id="3.1.6.2">
    <property type="organism ID" value="2681"/>
</dbReference>
<dbReference type="PathwayCommons" id="P08842"/>
<dbReference type="Reactome" id="R-HSA-1663150">
    <property type="pathway name" value="The activation of arylsulfatases"/>
</dbReference>
<dbReference type="Reactome" id="R-HSA-196071">
    <property type="pathway name" value="Metabolism of steroid hormones"/>
</dbReference>
<dbReference type="Reactome" id="R-HSA-9840310">
    <property type="pathway name" value="Glycosphingolipid catabolism"/>
</dbReference>
<dbReference type="SignaLink" id="P08842"/>
<dbReference type="BioGRID-ORCS" id="412">
    <property type="hits" value="8 hits in 780 CRISPR screens"/>
</dbReference>
<dbReference type="ChiTaRS" id="STS">
    <property type="organism name" value="human"/>
</dbReference>
<dbReference type="EvolutionaryTrace" id="P08842"/>
<dbReference type="GeneWiki" id="Steroid_sulfatase"/>
<dbReference type="GenomeRNAi" id="412"/>
<dbReference type="Pharos" id="P08842">
    <property type="development level" value="Tchem"/>
</dbReference>
<dbReference type="PRO" id="PR:P08842"/>
<dbReference type="Proteomes" id="UP000005640">
    <property type="component" value="Chromosome X"/>
</dbReference>
<dbReference type="RNAct" id="P08842">
    <property type="molecule type" value="protein"/>
</dbReference>
<dbReference type="Bgee" id="ENSG00000101846">
    <property type="expression patterns" value="Expressed in placenta and 180 other cell types or tissues"/>
</dbReference>
<dbReference type="ExpressionAtlas" id="P08842">
    <property type="expression patterns" value="baseline and differential"/>
</dbReference>
<dbReference type="GO" id="GO:0005783">
    <property type="term" value="C:endoplasmic reticulum"/>
    <property type="evidence" value="ECO:0000304"/>
    <property type="project" value="ProtInc"/>
</dbReference>
<dbReference type="GO" id="GO:0005788">
    <property type="term" value="C:endoplasmic reticulum lumen"/>
    <property type="evidence" value="ECO:0000304"/>
    <property type="project" value="Reactome"/>
</dbReference>
<dbReference type="GO" id="GO:0005789">
    <property type="term" value="C:endoplasmic reticulum membrane"/>
    <property type="evidence" value="ECO:0000304"/>
    <property type="project" value="Reactome"/>
</dbReference>
<dbReference type="GO" id="GO:0005768">
    <property type="term" value="C:endosome"/>
    <property type="evidence" value="ECO:0000304"/>
    <property type="project" value="ProtInc"/>
</dbReference>
<dbReference type="GO" id="GO:0005794">
    <property type="term" value="C:Golgi apparatus"/>
    <property type="evidence" value="ECO:0000304"/>
    <property type="project" value="ProtInc"/>
</dbReference>
<dbReference type="GO" id="GO:0043231">
    <property type="term" value="C:intracellular membrane-bounded organelle"/>
    <property type="evidence" value="ECO:0000304"/>
    <property type="project" value="ProtInc"/>
</dbReference>
<dbReference type="GO" id="GO:0005764">
    <property type="term" value="C:lysosome"/>
    <property type="evidence" value="ECO:0000304"/>
    <property type="project" value="ProtInc"/>
</dbReference>
<dbReference type="GO" id="GO:0016020">
    <property type="term" value="C:membrane"/>
    <property type="evidence" value="ECO:0000304"/>
    <property type="project" value="ProtInc"/>
</dbReference>
<dbReference type="GO" id="GO:0005886">
    <property type="term" value="C:plasma membrane"/>
    <property type="evidence" value="ECO:0000304"/>
    <property type="project" value="ProtInc"/>
</dbReference>
<dbReference type="GO" id="GO:0004065">
    <property type="term" value="F:arylsulfatase activity"/>
    <property type="evidence" value="ECO:0000318"/>
    <property type="project" value="GO_Central"/>
</dbReference>
<dbReference type="GO" id="GO:0046872">
    <property type="term" value="F:metal ion binding"/>
    <property type="evidence" value="ECO:0007669"/>
    <property type="project" value="UniProtKB-KW"/>
</dbReference>
<dbReference type="GO" id="GO:0004773">
    <property type="term" value="F:steryl-sulfatase activity"/>
    <property type="evidence" value="ECO:0000304"/>
    <property type="project" value="ProtInc"/>
</dbReference>
<dbReference type="GO" id="GO:0008484">
    <property type="term" value="F:sulfuric ester hydrolase activity"/>
    <property type="evidence" value="ECO:0000314"/>
    <property type="project" value="MGI"/>
</dbReference>
<dbReference type="GO" id="GO:0008544">
    <property type="term" value="P:epidermis development"/>
    <property type="evidence" value="ECO:0000304"/>
    <property type="project" value="ProtInc"/>
</dbReference>
<dbReference type="GO" id="GO:0007565">
    <property type="term" value="P:female pregnancy"/>
    <property type="evidence" value="ECO:0007669"/>
    <property type="project" value="UniProtKB-KW"/>
</dbReference>
<dbReference type="GO" id="GO:0006706">
    <property type="term" value="P:steroid catabolic process"/>
    <property type="evidence" value="ECO:0000304"/>
    <property type="project" value="ProtInc"/>
</dbReference>
<dbReference type="CDD" id="cd16159">
    <property type="entry name" value="ES"/>
    <property type="match status" value="1"/>
</dbReference>
<dbReference type="FunFam" id="3.30.1120.10:FF:000001">
    <property type="entry name" value="Arylsulfatase E"/>
    <property type="match status" value="1"/>
</dbReference>
<dbReference type="FunFam" id="3.40.720.10:FF:000142">
    <property type="entry name" value="Predicted protein"/>
    <property type="match status" value="1"/>
</dbReference>
<dbReference type="FunFam" id="1.10.287.550:FF:000002">
    <property type="entry name" value="Steroid sulfatase"/>
    <property type="match status" value="1"/>
</dbReference>
<dbReference type="Gene3D" id="3.30.1120.10">
    <property type="match status" value="1"/>
</dbReference>
<dbReference type="Gene3D" id="3.40.720.10">
    <property type="entry name" value="Alkaline Phosphatase, subunit A"/>
    <property type="match status" value="1"/>
</dbReference>
<dbReference type="Gene3D" id="1.10.287.550">
    <property type="entry name" value="Helix hairpin bin"/>
    <property type="match status" value="1"/>
</dbReference>
<dbReference type="InterPro" id="IPR017850">
    <property type="entry name" value="Alkaline_phosphatase_core_sf"/>
</dbReference>
<dbReference type="InterPro" id="IPR050738">
    <property type="entry name" value="Sulfatase"/>
</dbReference>
<dbReference type="InterPro" id="IPR024607">
    <property type="entry name" value="Sulfatase_CS"/>
</dbReference>
<dbReference type="InterPro" id="IPR000917">
    <property type="entry name" value="Sulfatase_N"/>
</dbReference>
<dbReference type="PANTHER" id="PTHR42693">
    <property type="entry name" value="ARYLSULFATASE FAMILY MEMBER"/>
    <property type="match status" value="1"/>
</dbReference>
<dbReference type="PANTHER" id="PTHR42693:SF9">
    <property type="entry name" value="STERYL-SULFATASE"/>
    <property type="match status" value="1"/>
</dbReference>
<dbReference type="Pfam" id="PF00884">
    <property type="entry name" value="Sulfatase"/>
    <property type="match status" value="1"/>
</dbReference>
<dbReference type="Pfam" id="PF14707">
    <property type="entry name" value="Sulfatase_C"/>
    <property type="match status" value="1"/>
</dbReference>
<dbReference type="SUPFAM" id="SSF53649">
    <property type="entry name" value="Alkaline phosphatase-like"/>
    <property type="match status" value="1"/>
</dbReference>
<dbReference type="PROSITE" id="PS00523">
    <property type="entry name" value="SULFATASE_1"/>
    <property type="match status" value="1"/>
</dbReference>
<dbReference type="PROSITE" id="PS00149">
    <property type="entry name" value="SULFATASE_2"/>
    <property type="match status" value="1"/>
</dbReference>
<name>STS_HUMAN</name>
<keyword id="KW-0002">3D-structure</keyword>
<keyword id="KW-0106">Calcium</keyword>
<keyword id="KW-0968">Cytoplasmic vesicle</keyword>
<keyword id="KW-0903">Direct protein sequencing</keyword>
<keyword id="KW-0225">Disease variant</keyword>
<keyword id="KW-1015">Disulfide bond</keyword>
<keyword id="KW-0256">Endoplasmic reticulum</keyword>
<keyword id="KW-0325">Glycoprotein</keyword>
<keyword id="KW-0378">Hydrolase</keyword>
<keyword id="KW-0977">Ichthyosis</keyword>
<keyword id="KW-0443">Lipid metabolism</keyword>
<keyword id="KW-0472">Membrane</keyword>
<keyword id="KW-0479">Metal-binding</keyword>
<keyword id="KW-0635">Pregnancy</keyword>
<keyword id="KW-1267">Proteomics identification</keyword>
<keyword id="KW-1185">Reference proteome</keyword>
<keyword id="KW-0732">Signal</keyword>
<keyword id="KW-0753">Steroid metabolism</keyword>
<keyword id="KW-0812">Transmembrane</keyword>
<keyword id="KW-1133">Transmembrane helix</keyword>
<comment type="function">
    <text evidence="2 5 8">Catalyzes the conversion of sulfated steroid precursors, such as dehydroepiandrosterone sulfate (DHEA-S) and estrone sulfate to the free steroid.</text>
</comment>
<comment type="catalytic activity">
    <reaction evidence="2 5">
        <text>dehydroepiandrosterone 3-sulfate + H2O = 3beta-hydroxyandrost-5-en-17-one + sulfate + H(+)</text>
        <dbReference type="Rhea" id="RHEA:19873"/>
        <dbReference type="ChEBI" id="CHEBI:15377"/>
        <dbReference type="ChEBI" id="CHEBI:15378"/>
        <dbReference type="ChEBI" id="CHEBI:16189"/>
        <dbReference type="ChEBI" id="CHEBI:28689"/>
        <dbReference type="ChEBI" id="CHEBI:57905"/>
        <dbReference type="EC" id="3.1.6.2"/>
    </reaction>
</comment>
<comment type="catalytic activity">
    <reaction evidence="8">
        <text>estrone 3-sulfate + H2O = estrone + sulfate + H(+)</text>
        <dbReference type="Rhea" id="RHEA:31055"/>
        <dbReference type="ChEBI" id="CHEBI:15377"/>
        <dbReference type="ChEBI" id="CHEBI:15378"/>
        <dbReference type="ChEBI" id="CHEBI:16189"/>
        <dbReference type="ChEBI" id="CHEBI:17263"/>
        <dbReference type="ChEBI" id="CHEBI:60050"/>
    </reaction>
</comment>
<comment type="cofactor">
    <cofactor evidence="3">
        <name>Ca(2+)</name>
        <dbReference type="ChEBI" id="CHEBI:29108"/>
    </cofactor>
    <text evidence="3">Binds 1 Ca(2+) ion per subunit.</text>
</comment>
<comment type="biophysicochemical properties">
    <kinetics>
        <KM evidence="5">24.8 uM for 3beta-sulfooxy-androst-5-en-17-one (DHEA-S)</KM>
        <Vmax evidence="5">354.4 umol/min/mg enzyme with 3beta-sulfooxy-androst-5-en-17-one (DHEA-S)</Vmax>
    </kinetics>
</comment>
<comment type="subunit">
    <text evidence="3">Homodimer.</text>
</comment>
<comment type="subcellular location">
    <subcellularLocation>
        <location evidence="6">Cytoplasmic vesicle</location>
        <location evidence="6">Secretory vesicle</location>
        <location evidence="6">Microneme membrane</location>
        <topology>Multi-pass membrane protein</topology>
    </subcellularLocation>
    <subcellularLocation>
        <location evidence="6">Endoplasmic reticulum membrane</location>
        <topology>Multi-pass membrane protein</topology>
    </subcellularLocation>
</comment>
<comment type="PTM">
    <text evidence="3">The conversion to 3-oxoalanine (also known as C-formylglycine, FGly), of a serine or cysteine residue in prokaryotes and of a cysteine residue in eukaryotes, is critical for catalytic activity.</text>
</comment>
<comment type="disease" evidence="1 2 4 8">
    <disease id="DI-00592">
        <name>Ichthyosis, X-linked</name>
        <acronym>IXL</acronym>
        <description>A keratinization disorder manifesting with mild erythroderma and generalized exfoliation of the skin within a few weeks after birth. Affected boys later develop large, polygonal, dark brown scales, especially on the neck, extremities, trunk, and buttocks.</description>
        <dbReference type="MIM" id="308100"/>
    </disease>
    <text>The disease is caused by variants affecting the gene represented in this entry.</text>
</comment>
<comment type="similarity">
    <text evidence="10">Belongs to the sulfatase family.</text>
</comment>
<comment type="online information" name="Wikipedia">
    <link uri="https://en.wikipedia.org/wiki/Steroid_sulfatase"/>
    <text>Steroid sulfatase entry</text>
</comment>
<proteinExistence type="evidence at protein level"/>
<feature type="signal peptide" evidence="7">
    <location>
        <begin position="1"/>
        <end position="21"/>
    </location>
</feature>
<feature type="chain" id="PRO_0000033414" description="Steryl-sulfatase">
    <location>
        <begin position="22"/>
        <end position="583"/>
    </location>
</feature>
<feature type="topological domain" description="Lumenal" evidence="6">
    <location>
        <begin position="22"/>
        <end position="184"/>
    </location>
</feature>
<feature type="transmembrane region" description="Helical" evidence="6">
    <location>
        <begin position="185"/>
        <end position="208"/>
    </location>
</feature>
<feature type="topological domain" description="Cytoplasmic" evidence="6">
    <location>
        <begin position="209"/>
        <end position="212"/>
    </location>
</feature>
<feature type="transmembrane region" description="Helical" evidence="6">
    <location>
        <begin position="213"/>
        <end position="234"/>
    </location>
</feature>
<feature type="topological domain" description="Lumenal" evidence="6">
    <location>
        <begin position="235"/>
        <end position="583"/>
    </location>
</feature>
<feature type="active site" description="Nucleophile" evidence="3">
    <location>
        <position position="75"/>
    </location>
</feature>
<feature type="active site" evidence="3">
    <location>
        <position position="136"/>
    </location>
</feature>
<feature type="binding site" evidence="3">
    <location>
        <position position="35"/>
    </location>
    <ligand>
        <name>Ca(2+)</name>
        <dbReference type="ChEBI" id="CHEBI:29108"/>
    </ligand>
</feature>
<feature type="binding site" evidence="3">
    <location>
        <position position="36"/>
    </location>
    <ligand>
        <name>Ca(2+)</name>
        <dbReference type="ChEBI" id="CHEBI:29108"/>
    </ligand>
</feature>
<feature type="binding site" description="via 3-oxoalanine" evidence="3">
    <location>
        <position position="75"/>
    </location>
    <ligand>
        <name>Ca(2+)</name>
        <dbReference type="ChEBI" id="CHEBI:29108"/>
    </ligand>
</feature>
<feature type="binding site" evidence="3">
    <location>
        <position position="342"/>
    </location>
    <ligand>
        <name>Ca(2+)</name>
        <dbReference type="ChEBI" id="CHEBI:29108"/>
    </ligand>
</feature>
<feature type="binding site" evidence="3">
    <location>
        <position position="343"/>
    </location>
    <ligand>
        <name>Ca(2+)</name>
        <dbReference type="ChEBI" id="CHEBI:29108"/>
    </ligand>
</feature>
<feature type="site" description="Not glycosylated" evidence="6">
    <location>
        <position position="333"/>
    </location>
</feature>
<feature type="site" description="Not glycosylated" evidence="6">
    <location>
        <position position="459"/>
    </location>
</feature>
<feature type="modified residue" description="3-oxoalanine (Cys)" evidence="3">
    <location>
        <position position="75"/>
    </location>
</feature>
<feature type="glycosylation site" description="N-linked (GlcNAc...) asparagine" evidence="3 6">
    <location>
        <position position="47"/>
    </location>
</feature>
<feature type="glycosylation site" description="N-linked (GlcNAc...) asparagine" evidence="3 6">
    <location>
        <position position="259"/>
    </location>
</feature>
<feature type="disulfide bond">
    <location>
        <begin position="141"/>
        <end position="148"/>
    </location>
</feature>
<feature type="disulfide bond">
    <location>
        <begin position="170"/>
        <end position="242"/>
    </location>
</feature>
<feature type="disulfide bond">
    <location>
        <begin position="446"/>
        <end position="489"/>
    </location>
</feature>
<feature type="disulfide bond">
    <location>
        <begin position="481"/>
        <end position="487"/>
    </location>
</feature>
<feature type="disulfide bond">
    <location>
        <begin position="562"/>
        <end position="570"/>
    </location>
</feature>
<feature type="disulfide bond">
    <location>
        <begin position="563"/>
        <end position="572"/>
    </location>
</feature>
<feature type="sequence variant" id="VAR_007240" description="In IXL; loss of steryl-sulfatase activity; dbSNP:rs137853167." evidence="4 8">
    <original>S</original>
    <variation>L</variation>
    <location>
        <position position="341"/>
    </location>
</feature>
<feature type="sequence variant" id="VAR_007241" description="In IXL; loss of steryl-sulfatase activity; dbSNP:rs137853165." evidence="4 8">
    <original>W</original>
    <variation>R</variation>
    <location>
        <position position="372"/>
    </location>
</feature>
<feature type="sequence variant" id="VAR_014020" description="In IXL; loss of steryl-sulfatase activity; dbSNP:rs137853168." evidence="8">
    <original>W</original>
    <variation>S</variation>
    <location>
        <position position="372"/>
    </location>
</feature>
<feature type="sequence variant" id="VAR_014021" description="In IXL; strong decreases of steryl-sulfatase activity." evidence="2">
    <original>G</original>
    <variation>R</variation>
    <location>
        <position position="380"/>
    </location>
</feature>
<feature type="sequence variant" id="VAR_014022" description="In IXL; loss of steryl-sulfatase activity; dbSNP:rs137853169." evidence="8">
    <original>H</original>
    <variation>R</variation>
    <location>
        <position position="444"/>
    </location>
</feature>
<feature type="sequence variant" id="VAR_007242" description="In IXL; loss of steryl-sulfatase activity; dbSNP:rs137853166." evidence="4 8">
    <original>C</original>
    <variation>Y</variation>
    <location>
        <position position="446"/>
    </location>
</feature>
<feature type="sequence variant" id="VAR_081729" description="Does not affect steryl-sulfatase activity; dbSNP:rs183370963." evidence="5">
    <original>V</original>
    <variation>M</variation>
    <location>
        <position position="476"/>
    </location>
</feature>
<feature type="sequence variant" id="VAR_014023" description="In IXL." evidence="1">
    <original>Q</original>
    <variation>P</variation>
    <location>
        <position position="560"/>
    </location>
</feature>
<feature type="sequence conflict" description="In Ref. 2; AAA60596." evidence="10" ref="2">
    <original>A</original>
    <variation>E</variation>
    <location>
        <position position="23"/>
    </location>
</feature>
<feature type="strand" evidence="12">
    <location>
        <begin position="28"/>
        <end position="36"/>
    </location>
</feature>
<feature type="helix" evidence="12">
    <location>
        <begin position="43"/>
        <end position="45"/>
    </location>
</feature>
<feature type="strand" evidence="12">
    <location>
        <begin position="48"/>
        <end position="50"/>
    </location>
</feature>
<feature type="helix" evidence="12">
    <location>
        <begin position="53"/>
        <end position="60"/>
    </location>
</feature>
<feature type="strand" evidence="12">
    <location>
        <begin position="62"/>
        <end position="69"/>
    </location>
</feature>
<feature type="helix" evidence="12">
    <location>
        <begin position="75"/>
        <end position="84"/>
    </location>
</feature>
<feature type="helix" evidence="12">
    <location>
        <begin position="88"/>
        <end position="91"/>
    </location>
</feature>
<feature type="strand" evidence="12">
    <location>
        <begin position="96"/>
        <end position="98"/>
    </location>
</feature>
<feature type="helix" evidence="12">
    <location>
        <begin position="118"/>
        <end position="123"/>
    </location>
</feature>
<feature type="turn" evidence="12">
    <location>
        <begin position="124"/>
        <end position="126"/>
    </location>
</feature>
<feature type="strand" evidence="12">
    <location>
        <begin position="128"/>
        <end position="134"/>
    </location>
</feature>
<feature type="strand" evidence="12">
    <location>
        <begin position="141"/>
        <end position="143"/>
    </location>
</feature>
<feature type="turn" evidence="12">
    <location>
        <begin position="144"/>
        <end position="146"/>
    </location>
</feature>
<feature type="helix" evidence="12">
    <location>
        <begin position="151"/>
        <end position="153"/>
    </location>
</feature>
<feature type="strand" evidence="12">
    <location>
        <begin position="157"/>
        <end position="164"/>
    </location>
</feature>
<feature type="helix" evidence="12">
    <location>
        <begin position="168"/>
        <end position="170"/>
    </location>
</feature>
<feature type="helix" evidence="12">
    <location>
        <begin position="179"/>
        <end position="185"/>
    </location>
</feature>
<feature type="helix" evidence="12">
    <location>
        <begin position="187"/>
        <end position="205"/>
    </location>
</feature>
<feature type="helix" evidence="12">
    <location>
        <begin position="213"/>
        <end position="241"/>
    </location>
</feature>
<feature type="strand" evidence="12">
    <location>
        <begin position="244"/>
        <end position="246"/>
    </location>
</feature>
<feature type="strand" evidence="12">
    <location>
        <begin position="249"/>
        <end position="254"/>
    </location>
</feature>
<feature type="helix" evidence="12">
    <location>
        <begin position="260"/>
        <end position="273"/>
    </location>
</feature>
<feature type="strand" evidence="12">
    <location>
        <begin position="276"/>
        <end position="278"/>
    </location>
</feature>
<feature type="strand" evidence="12">
    <location>
        <begin position="280"/>
        <end position="285"/>
    </location>
</feature>
<feature type="strand" evidence="12">
    <location>
        <begin position="290"/>
        <end position="292"/>
    </location>
</feature>
<feature type="turn" evidence="12">
    <location>
        <begin position="297"/>
        <end position="301"/>
    </location>
</feature>
<feature type="strand" evidence="12">
    <location>
        <begin position="303"/>
        <end position="305"/>
    </location>
</feature>
<feature type="helix" evidence="12">
    <location>
        <begin position="307"/>
        <end position="328"/>
    </location>
</feature>
<feature type="helix" evidence="11">
    <location>
        <begin position="332"/>
        <end position="334"/>
    </location>
</feature>
<feature type="strand" evidence="12">
    <location>
        <begin position="335"/>
        <end position="343"/>
    </location>
</feature>
<feature type="strand" evidence="11">
    <location>
        <begin position="352"/>
        <end position="354"/>
    </location>
</feature>
<feature type="strand" evidence="11">
    <location>
        <begin position="370"/>
        <end position="372"/>
    </location>
</feature>
<feature type="helix" evidence="12">
    <location>
        <begin position="373"/>
        <end position="376"/>
    </location>
</feature>
<feature type="strand" evidence="12">
    <location>
        <begin position="380"/>
        <end position="383"/>
    </location>
</feature>
<feature type="turn" evidence="12">
    <location>
        <begin position="385"/>
        <end position="387"/>
    </location>
</feature>
<feature type="strand" evidence="12">
    <location>
        <begin position="392"/>
        <end position="399"/>
    </location>
</feature>
<feature type="helix" evidence="12">
    <location>
        <begin position="400"/>
        <end position="402"/>
    </location>
</feature>
<feature type="helix" evidence="12">
    <location>
        <begin position="403"/>
        <end position="411"/>
    </location>
</feature>
<feature type="strand" evidence="12">
    <location>
        <begin position="417"/>
        <end position="419"/>
    </location>
</feature>
<feature type="helix" evidence="12">
    <location>
        <begin position="427"/>
        <end position="430"/>
    </location>
</feature>
<feature type="strand" evidence="12">
    <location>
        <begin position="440"/>
        <end position="446"/>
    </location>
</feature>
<feature type="strand" evidence="12">
    <location>
        <begin position="449"/>
        <end position="455"/>
    </location>
</feature>
<feature type="strand" evidence="12">
    <location>
        <begin position="464"/>
        <end position="471"/>
    </location>
</feature>
<feature type="strand" evidence="12">
    <location>
        <begin position="483"/>
        <end position="486"/>
    </location>
</feature>
<feature type="helix" evidence="12">
    <location>
        <begin position="491"/>
        <end position="493"/>
    </location>
</feature>
<feature type="strand" evidence="12">
    <location>
        <begin position="494"/>
        <end position="504"/>
    </location>
</feature>
<feature type="turn" evidence="12">
    <location>
        <begin position="505"/>
        <end position="507"/>
    </location>
</feature>
<feature type="strand" evidence="12">
    <location>
        <begin position="516"/>
        <end position="519"/>
    </location>
</feature>
<feature type="helix" evidence="12">
    <location>
        <begin position="520"/>
        <end position="522"/>
    </location>
</feature>
<feature type="helix" evidence="12">
    <location>
        <begin position="523"/>
        <end position="538"/>
    </location>
</feature>
<feature type="helix" evidence="12">
    <location>
        <begin position="550"/>
        <end position="553"/>
    </location>
</feature>
<feature type="helix" evidence="12">
    <location>
        <begin position="557"/>
        <end position="559"/>
    </location>
</feature>
<feature type="strand" evidence="11">
    <location>
        <begin position="563"/>
        <end position="568"/>
    </location>
</feature>
<feature type="strand" evidence="12">
    <location>
        <begin position="572"/>
        <end position="574"/>
    </location>
</feature>
<gene>
    <name type="primary">STS</name>
    <name type="synonym">ARSC1</name>
</gene>
<organism>
    <name type="scientific">Homo sapiens</name>
    <name type="common">Human</name>
    <dbReference type="NCBI Taxonomy" id="9606"/>
    <lineage>
        <taxon>Eukaryota</taxon>
        <taxon>Metazoa</taxon>
        <taxon>Chordata</taxon>
        <taxon>Craniata</taxon>
        <taxon>Vertebrata</taxon>
        <taxon>Euteleostomi</taxon>
        <taxon>Mammalia</taxon>
        <taxon>Eutheria</taxon>
        <taxon>Euarchontoglires</taxon>
        <taxon>Primates</taxon>
        <taxon>Haplorrhini</taxon>
        <taxon>Catarrhini</taxon>
        <taxon>Hominidae</taxon>
        <taxon>Homo</taxon>
    </lineage>
</organism>
<accession>P08842</accession>
<accession>B2RA47</accession>
<evidence type="ECO:0000269" key="1">
    <source>
    </source>
</evidence>
<evidence type="ECO:0000269" key="2">
    <source>
    </source>
</evidence>
<evidence type="ECO:0000269" key="3">
    <source>
    </source>
</evidence>
<evidence type="ECO:0000269" key="4">
    <source>
    </source>
</evidence>
<evidence type="ECO:0000269" key="5">
    <source>
    </source>
</evidence>
<evidence type="ECO:0000269" key="6">
    <source>
    </source>
</evidence>
<evidence type="ECO:0000269" key="7">
    <source>
    </source>
</evidence>
<evidence type="ECO:0000269" key="8">
    <source>
    </source>
</evidence>
<evidence type="ECO:0000303" key="9">
    <source>
    </source>
</evidence>
<evidence type="ECO:0000305" key="10"/>
<evidence type="ECO:0007829" key="11">
    <source>
        <dbReference type="PDB" id="1P49"/>
    </source>
</evidence>
<evidence type="ECO:0007829" key="12">
    <source>
        <dbReference type="PDB" id="8EG3"/>
    </source>
</evidence>
<protein>
    <recommendedName>
        <fullName>Steryl-sulfatase</fullName>
        <ecNumber evidence="2 5 8">3.1.6.2</ecNumber>
    </recommendedName>
    <alternativeName>
        <fullName>Arylsulfatase C</fullName>
        <shortName>ASC</shortName>
    </alternativeName>
    <alternativeName>
        <fullName evidence="9">Estrone sulfatase</fullName>
    </alternativeName>
    <alternativeName>
        <fullName>Steroid sulfatase</fullName>
    </alternativeName>
    <alternativeName>
        <fullName>Steryl-sulfate sulfohydrolase</fullName>
    </alternativeName>
</protein>
<sequence>MPLRKMKIPFLLLFFLWEAESHAASRPNIILVMADDLGIGDPGCYGNKTIRTPNIDRLASGGVKLTQHLAASPLCTPSRAAFMTGRYPVRSGMASWSRTGVFLFTASSGGLPTDEITFAKLLKDQGYSTALIGKWHLGMSCHSKTDFCHHPLHHGFNYFYGISLTNLRDCKPGEGSVFTTGFKRLVFLPLQIVGVTLLTLAALNCLGLLHVPLGVFFSLLFLAALILTLFLGFLHYFRPLNCFMMRNYEIIQQPMSYDNLTQRLTVEAAQFIQRNTETPFLLVLSYLHVHTALFSSKDFAGKSQHGVYGDAVEEMDWSVGQILNLLDELRLANDTLIYFTSDQGAHVEEVSSKGEIHGGSNGIYKGGKANNWEGGIRVPGILRWPRVIQAGQKIDEPTSNMDIFPTVAKLAGAPLPEDRIIDGRDLMPLLEGKSQRSDHEFLFHYCNAYLNAVRWHPQNSTSIWKAFFFTPNFNPVGSNGCFATHVCFCFGSYVTHHDPPLLFDISKDPRERNPLTPASEPRFYEILKVMQEAADRHTQTLPEVPDQFSWNNFLWKPWLQLCCPSTGLSCQCDREKQDKRLSR</sequence>
<reference key="1">
    <citation type="journal article" date="1989" name="J. Biol. Chem.">
        <title>Cloning and expression of human steroid-sulfatase. Membrane topology, glycosylation, and subcellular distribution in BHK-21 cells.</title>
        <authorList>
            <person name="Stein C."/>
            <person name="Hille A."/>
            <person name="Seidel J."/>
            <person name="Rijnbout S."/>
            <person name="Waheed A."/>
            <person name="Schmidt B."/>
            <person name="Geuze H."/>
            <person name="von Figura K."/>
        </authorList>
    </citation>
    <scope>NUCLEOTIDE SEQUENCE [MRNA]</scope>
    <scope>PARTIAL PROTEIN SEQUENCE</scope>
    <scope>GLYCOSYLATION AT ASN-47 AND ASN-259</scope>
    <scope>LACK OF GLYCOSYLATION AT ASN-333 AND ASN-459</scope>
    <scope>SUBCELLULAR LOCATION</scope>
    <scope>TOPOLOGY</scope>
</reference>
<reference key="2">
    <citation type="journal article" date="1987" name="Cell">
        <title>Cloning and expression of steroid sulfatase cDNA and the frequent occurrence of deletions in STS deficiency: implications for X-Y interchange.</title>
        <authorList>
            <person name="Yen P.H."/>
            <person name="Allen E."/>
            <person name="Marsh B."/>
            <person name="Mohandas T."/>
            <person name="Wang N."/>
            <person name="Taggart R.T."/>
            <person name="Shapiro L.J."/>
        </authorList>
    </citation>
    <scope>NUCLEOTIDE SEQUENCE [MRNA]</scope>
</reference>
<reference key="3">
    <citation type="journal article" date="2004" name="Nat. Genet.">
        <title>Complete sequencing and characterization of 21,243 full-length human cDNAs.</title>
        <authorList>
            <person name="Ota T."/>
            <person name="Suzuki Y."/>
            <person name="Nishikawa T."/>
            <person name="Otsuki T."/>
            <person name="Sugiyama T."/>
            <person name="Irie R."/>
            <person name="Wakamatsu A."/>
            <person name="Hayashi K."/>
            <person name="Sato H."/>
            <person name="Nagai K."/>
            <person name="Kimura K."/>
            <person name="Makita H."/>
            <person name="Sekine M."/>
            <person name="Obayashi M."/>
            <person name="Nishi T."/>
            <person name="Shibahara T."/>
            <person name="Tanaka T."/>
            <person name="Ishii S."/>
            <person name="Yamamoto J."/>
            <person name="Saito K."/>
            <person name="Kawai Y."/>
            <person name="Isono Y."/>
            <person name="Nakamura Y."/>
            <person name="Nagahari K."/>
            <person name="Murakami K."/>
            <person name="Yasuda T."/>
            <person name="Iwayanagi T."/>
            <person name="Wagatsuma M."/>
            <person name="Shiratori A."/>
            <person name="Sudo H."/>
            <person name="Hosoiri T."/>
            <person name="Kaku Y."/>
            <person name="Kodaira H."/>
            <person name="Kondo H."/>
            <person name="Sugawara M."/>
            <person name="Takahashi M."/>
            <person name="Kanda K."/>
            <person name="Yokoi T."/>
            <person name="Furuya T."/>
            <person name="Kikkawa E."/>
            <person name="Omura Y."/>
            <person name="Abe K."/>
            <person name="Kamihara K."/>
            <person name="Katsuta N."/>
            <person name="Sato K."/>
            <person name="Tanikawa M."/>
            <person name="Yamazaki M."/>
            <person name="Ninomiya K."/>
            <person name="Ishibashi T."/>
            <person name="Yamashita H."/>
            <person name="Murakawa K."/>
            <person name="Fujimori K."/>
            <person name="Tanai H."/>
            <person name="Kimata M."/>
            <person name="Watanabe M."/>
            <person name="Hiraoka S."/>
            <person name="Chiba Y."/>
            <person name="Ishida S."/>
            <person name="Ono Y."/>
            <person name="Takiguchi S."/>
            <person name="Watanabe S."/>
            <person name="Yosida M."/>
            <person name="Hotuta T."/>
            <person name="Kusano J."/>
            <person name="Kanehori K."/>
            <person name="Takahashi-Fujii A."/>
            <person name="Hara H."/>
            <person name="Tanase T.-O."/>
            <person name="Nomura Y."/>
            <person name="Togiya S."/>
            <person name="Komai F."/>
            <person name="Hara R."/>
            <person name="Takeuchi K."/>
            <person name="Arita M."/>
            <person name="Imose N."/>
            <person name="Musashino K."/>
            <person name="Yuuki H."/>
            <person name="Oshima A."/>
            <person name="Sasaki N."/>
            <person name="Aotsuka S."/>
            <person name="Yoshikawa Y."/>
            <person name="Matsunawa H."/>
            <person name="Ichihara T."/>
            <person name="Shiohata N."/>
            <person name="Sano S."/>
            <person name="Moriya S."/>
            <person name="Momiyama H."/>
            <person name="Satoh N."/>
            <person name="Takami S."/>
            <person name="Terashima Y."/>
            <person name="Suzuki O."/>
            <person name="Nakagawa S."/>
            <person name="Senoh A."/>
            <person name="Mizoguchi H."/>
            <person name="Goto Y."/>
            <person name="Shimizu F."/>
            <person name="Wakebe H."/>
            <person name="Hishigaki H."/>
            <person name="Watanabe T."/>
            <person name="Sugiyama A."/>
            <person name="Takemoto M."/>
            <person name="Kawakami B."/>
            <person name="Yamazaki M."/>
            <person name="Watanabe K."/>
            <person name="Kumagai A."/>
            <person name="Itakura S."/>
            <person name="Fukuzumi Y."/>
            <person name="Fujimori Y."/>
            <person name="Komiyama M."/>
            <person name="Tashiro H."/>
            <person name="Tanigami A."/>
            <person name="Fujiwara T."/>
            <person name="Ono T."/>
            <person name="Yamada K."/>
            <person name="Fujii Y."/>
            <person name="Ozaki K."/>
            <person name="Hirao M."/>
            <person name="Ohmori Y."/>
            <person name="Kawabata A."/>
            <person name="Hikiji T."/>
            <person name="Kobatake N."/>
            <person name="Inagaki H."/>
            <person name="Ikema Y."/>
            <person name="Okamoto S."/>
            <person name="Okitani R."/>
            <person name="Kawakami T."/>
            <person name="Noguchi S."/>
            <person name="Itoh T."/>
            <person name="Shigeta K."/>
            <person name="Senba T."/>
            <person name="Matsumura K."/>
            <person name="Nakajima Y."/>
            <person name="Mizuno T."/>
            <person name="Morinaga M."/>
            <person name="Sasaki M."/>
            <person name="Togashi T."/>
            <person name="Oyama M."/>
            <person name="Hata H."/>
            <person name="Watanabe M."/>
            <person name="Komatsu T."/>
            <person name="Mizushima-Sugano J."/>
            <person name="Satoh T."/>
            <person name="Shirai Y."/>
            <person name="Takahashi Y."/>
            <person name="Nakagawa K."/>
            <person name="Okumura K."/>
            <person name="Nagase T."/>
            <person name="Nomura N."/>
            <person name="Kikuchi H."/>
            <person name="Masuho Y."/>
            <person name="Yamashita R."/>
            <person name="Nakai K."/>
            <person name="Yada T."/>
            <person name="Nakamura Y."/>
            <person name="Ohara O."/>
            <person name="Isogai T."/>
            <person name="Sugano S."/>
        </authorList>
    </citation>
    <scope>NUCLEOTIDE SEQUENCE [LARGE SCALE MRNA]</scope>
    <source>
        <tissue>Placenta</tissue>
    </source>
</reference>
<reference key="4">
    <citation type="journal article" date="2004" name="Genome Res.">
        <title>The status, quality, and expansion of the NIH full-length cDNA project: the Mammalian Gene Collection (MGC).</title>
        <authorList>
            <consortium name="The MGC Project Team"/>
        </authorList>
    </citation>
    <scope>NUCLEOTIDE SEQUENCE [LARGE SCALE MRNA]</scope>
</reference>
<reference key="5">
    <citation type="journal article" date="1988" name="Cell">
        <title>The human X-linked steroid sulfatase gene and a Y-encoded pseudogene: evidence for an inversion of the Y chromosome during primate evolution.</title>
        <authorList>
            <person name="Yen P.H."/>
            <person name="Marsh B."/>
            <person name="Allen E."/>
            <person name="Tsai S.P."/>
            <person name="Ellison J."/>
            <person name="Connolly L."/>
            <person name="Neiswanger K."/>
            <person name="Shapiro L.J."/>
        </authorList>
    </citation>
    <scope>NUCLEOTIDE SEQUENCE [GENOMIC DNA] OF 134-174 AND 461-583</scope>
</reference>
<reference key="6">
    <citation type="journal article" date="1989" name="Biochim. Biophys. Acta">
        <title>Characterization of rat and human steroid sulfatases.</title>
        <authorList>
            <person name="Kawano J."/>
            <person name="Kotani T."/>
            <person name="Ohtaki S."/>
            <person name="Minamino N."/>
            <person name="Matsuo H."/>
            <person name="Oinuma T."/>
            <person name="Aikawa E."/>
        </authorList>
    </citation>
    <scope>PROTEIN SEQUENCE OF 22-45</scope>
    <source>
        <tissue>Liver</tissue>
    </source>
</reference>
<reference key="7">
    <citation type="journal article" date="2003" name="J. Biol. Chem.">
        <title>Structure of human estrone sulfatase suggests functional roles of membrane association.</title>
        <authorList>
            <person name="Hernandez-Guzman F.G."/>
            <person name="Higashiyama T."/>
            <person name="Pangborn W."/>
            <person name="Osawa Y."/>
            <person name="Ghosh D."/>
        </authorList>
    </citation>
    <scope>X-RAY CRYSTALLOGRAPHY (2.6 ANGSTROMS) IN COMPLEX WITH CALCIUM IONS</scope>
    <scope>COFACTOR</scope>
    <scope>OXOALANINE AT CYS-75</scope>
    <scope>TRANSMEMBRANE TOPOLOGY</scope>
    <scope>ACTIVE SITE</scope>
    <scope>GLYCOSYLATION AT ASN-47 AND ASN-259</scope>
</reference>
<reference key="8">
    <citation type="journal article" date="1992" name="Am. J. Hum. Genet.">
        <title>Identification of point mutations in the steroid sulfatase gene of three patients with X-linked ichthyosis.</title>
        <authorList>
            <person name="Basler E."/>
            <person name="Grompe M."/>
            <person name="Parenti G."/>
            <person name="Yates J."/>
            <person name="Ballabio A."/>
        </authorList>
    </citation>
    <scope>VARIANTS IXL LEU-341; ARG-372 AND TYR-446</scope>
</reference>
<reference key="9">
    <citation type="journal article" date="1997" name="J. Biol. Chem.">
        <title>Characterization of point mutations in patients with X-linked ichthyosis. Effects on the structure and function of the steroid sulfatase protein.</title>
        <authorList>
            <person name="Alperin E.S."/>
            <person name="Shapiro L.J."/>
        </authorList>
    </citation>
    <scope>VARIANTS IXL LEU-341; ARG-372; SER-372; ARG-444 AND TYR-446</scope>
    <scope>CATALYTIC ACTIVITY</scope>
    <scope>CHARACTERIZATION OF VARIANTS IXL LEU-341; ARG-372; SER-372; ARG-444 AND TYR-446</scope>
</reference>
<reference key="10">
    <citation type="journal article" date="2000" name="Hum. Mutat.">
        <title>PCR diagnosis of X-linked ichthyosis: identification of a novel mutation (E560P) of the steroid sulfatase gene.</title>
        <authorList>
            <person name="Sugawara T."/>
            <person name="Shimizu H."/>
            <person name="Hoshi N."/>
            <person name="Fujimoto Y."/>
            <person name="Nakajima A."/>
            <person name="Fujimoto S."/>
        </authorList>
    </citation>
    <scope>VARIANT IXL PRO-560</scope>
</reference>
<reference key="11">
    <citation type="journal article" date="2000" name="J. Invest. Dermatol.">
        <title>Novel point mutations in the steroid sulfatase gene in patients with X-linked ichthyosis: transfection analysis using the mutated genes.</title>
        <authorList>
            <person name="Oyama N."/>
            <person name="Satoh M."/>
            <person name="Iwatsuki K."/>
            <person name="Kaneko F."/>
        </authorList>
    </citation>
    <scope>VARIANT IXL ARG-380</scope>
    <scope>CATALYTIC ACTIVITY</scope>
    <scope>CHARACTERIZATION OF VARIANT</scope>
</reference>
<reference key="12">
    <citation type="journal article" date="2013" name="J. Hum. Genet.">
        <title>Functional characterization of seven single-nucleotide polymorphisms of the steroid sulfatase gene found in a Japanese population.</title>
        <authorList>
            <person name="Matsumoto J."/>
            <person name="Ariyoshi N."/>
            <person name="Ishii I."/>
            <person name="Kitada M."/>
        </authorList>
    </citation>
    <scope>FUNCTION</scope>
    <scope>CATALYTIC ACTIVITY</scope>
    <scope>VARIANT MET-476</scope>
    <scope>BIOPHYSICOCHEMICAL PROPERTIES</scope>
</reference>